<accession>Q1GAT5</accession>
<evidence type="ECO:0000255" key="1">
    <source>
        <dbReference type="HAMAP-Rule" id="MF_00033"/>
    </source>
</evidence>
<protein>
    <recommendedName>
        <fullName evidence="1">UDP-N-acetylglucosamine--N-acetylmuramyl-(pentapeptide) pyrophosphoryl-undecaprenol N-acetylglucosamine transferase</fullName>
        <ecNumber evidence="1">2.4.1.227</ecNumber>
    </recommendedName>
    <alternativeName>
        <fullName evidence="1">Undecaprenyl-PP-MurNAc-pentapeptide-UDPGlcNAc GlcNAc transferase</fullName>
    </alternativeName>
</protein>
<feature type="chain" id="PRO_1000002660" description="UDP-N-acetylglucosamine--N-acetylmuramyl-(pentapeptide) pyrophosphoryl-undecaprenol N-acetylglucosamine transferase">
    <location>
        <begin position="1"/>
        <end position="370"/>
    </location>
</feature>
<feature type="binding site" evidence="1">
    <location>
        <begin position="10"/>
        <end position="12"/>
    </location>
    <ligand>
        <name>UDP-N-acetyl-alpha-D-glucosamine</name>
        <dbReference type="ChEBI" id="CHEBI:57705"/>
    </ligand>
</feature>
<feature type="binding site" evidence="1">
    <location>
        <position position="126"/>
    </location>
    <ligand>
        <name>UDP-N-acetyl-alpha-D-glucosamine</name>
        <dbReference type="ChEBI" id="CHEBI:57705"/>
    </ligand>
</feature>
<feature type="binding site" evidence="1">
    <location>
        <position position="200"/>
    </location>
    <ligand>
        <name>UDP-N-acetyl-alpha-D-glucosamine</name>
        <dbReference type="ChEBI" id="CHEBI:57705"/>
    </ligand>
</feature>
<feature type="binding site" evidence="1">
    <location>
        <position position="255"/>
    </location>
    <ligand>
        <name>UDP-N-acetyl-alpha-D-glucosamine</name>
        <dbReference type="ChEBI" id="CHEBI:57705"/>
    </ligand>
</feature>
<feature type="binding site" evidence="1">
    <location>
        <position position="300"/>
    </location>
    <ligand>
        <name>UDP-N-acetyl-alpha-D-glucosamine</name>
        <dbReference type="ChEBI" id="CHEBI:57705"/>
    </ligand>
</feature>
<proteinExistence type="inferred from homology"/>
<name>MURG_LACDA</name>
<comment type="function">
    <text evidence="1">Cell wall formation. Catalyzes the transfer of a GlcNAc subunit on undecaprenyl-pyrophosphoryl-MurNAc-pentapeptide (lipid intermediate I) to form undecaprenyl-pyrophosphoryl-MurNAc-(pentapeptide)GlcNAc (lipid intermediate II).</text>
</comment>
<comment type="catalytic activity">
    <reaction evidence="1">
        <text>Mur2Ac(oyl-L-Ala-gamma-D-Glu-L-Lys-D-Ala-D-Ala)-di-trans,octa-cis-undecaprenyl diphosphate + UDP-N-acetyl-alpha-D-glucosamine = beta-D-GlcNAc-(1-&gt;4)-Mur2Ac(oyl-L-Ala-gamma-D-Glu-L-Lys-D-Ala-D-Ala)-di-trans,octa-cis-undecaprenyl diphosphate + UDP + H(+)</text>
        <dbReference type="Rhea" id="RHEA:23192"/>
        <dbReference type="ChEBI" id="CHEBI:15378"/>
        <dbReference type="ChEBI" id="CHEBI:57705"/>
        <dbReference type="ChEBI" id="CHEBI:58223"/>
        <dbReference type="ChEBI" id="CHEBI:60032"/>
        <dbReference type="ChEBI" id="CHEBI:60033"/>
        <dbReference type="EC" id="2.4.1.227"/>
    </reaction>
</comment>
<comment type="pathway">
    <text evidence="1">Cell wall biogenesis; peptidoglycan biosynthesis.</text>
</comment>
<comment type="subcellular location">
    <subcellularLocation>
        <location evidence="1">Cell membrane</location>
        <topology evidence="1">Peripheral membrane protein</topology>
        <orientation evidence="1">Cytoplasmic side</orientation>
    </subcellularLocation>
</comment>
<comment type="similarity">
    <text evidence="1">Belongs to the glycosyltransferase 28 family. MurG subfamily.</text>
</comment>
<reference key="1">
    <citation type="journal article" date="2006" name="Proc. Natl. Acad. Sci. U.S.A.">
        <title>The complete genome sequence of Lactobacillus bulgaricus reveals extensive and ongoing reductive evolution.</title>
        <authorList>
            <person name="van de Guchte M."/>
            <person name="Penaud S."/>
            <person name="Grimaldi C."/>
            <person name="Barbe V."/>
            <person name="Bryson K."/>
            <person name="Nicolas P."/>
            <person name="Robert C."/>
            <person name="Oztas S."/>
            <person name="Mangenot S."/>
            <person name="Couloux A."/>
            <person name="Loux V."/>
            <person name="Dervyn R."/>
            <person name="Bossy R."/>
            <person name="Bolotin A."/>
            <person name="Batto J.-M."/>
            <person name="Walunas T."/>
            <person name="Gibrat J.-F."/>
            <person name="Bessieres P."/>
            <person name="Weissenbach J."/>
            <person name="Ehrlich S.D."/>
            <person name="Maguin E."/>
        </authorList>
    </citation>
    <scope>NUCLEOTIDE SEQUENCE [LARGE SCALE GENOMIC DNA]</scope>
    <source>
        <strain>ATCC 11842 / DSM 20081 / BCRC 10696 / JCM 1002 / NBRC 13953 / NCIMB 11778 / NCTC 12712 / WDCM 00102 / Lb 14</strain>
    </source>
</reference>
<gene>
    <name evidence="1" type="primary">murG</name>
    <name type="ordered locus">Ldb0741</name>
</gene>
<organism>
    <name type="scientific">Lactobacillus delbrueckii subsp. bulgaricus (strain ATCC 11842 / DSM 20081 / BCRC 10696 / JCM 1002 / NBRC 13953 / NCIMB 11778 / NCTC 12712 / WDCM 00102 / Lb 14)</name>
    <dbReference type="NCBI Taxonomy" id="390333"/>
    <lineage>
        <taxon>Bacteria</taxon>
        <taxon>Bacillati</taxon>
        <taxon>Bacillota</taxon>
        <taxon>Bacilli</taxon>
        <taxon>Lactobacillales</taxon>
        <taxon>Lactobacillaceae</taxon>
        <taxon>Lactobacillus</taxon>
    </lineage>
</organism>
<sequence>MRVIFSGGGTGGHIYPIMALIERLKEEGICQDDEILFVGTKKGLESKIVPAAGVNFKTIDIQGFDRKHLLNNVKTIQLFLKATKRAKEILADFQPDVVLGTGGYVSGAIVYEASKMKIPTMIHESNSVVGVANKFLGHYVDKICYTFDDAAKEFPEKKKLVKTGNPRSQQVLSLNAKPVDLAGDLGLNPKIPTVLVFGGSRGALAINRVMLKSLMELKKKPYQVIWATGTYYYDAIEKKLADVDYDDSIKVVPYIDNMPGLLPEMTCVVSRSGATSLAEFTALGVPVILIPSPNVTHNHQMKNAMDLEKAGAALVIAEDDLNENTFVSSIDHLLLDQSYDEKMRQASKALGVPDASDQVIKVMKEIAKKN</sequence>
<keyword id="KW-0131">Cell cycle</keyword>
<keyword id="KW-0132">Cell division</keyword>
<keyword id="KW-1003">Cell membrane</keyword>
<keyword id="KW-0133">Cell shape</keyword>
<keyword id="KW-0961">Cell wall biogenesis/degradation</keyword>
<keyword id="KW-0328">Glycosyltransferase</keyword>
<keyword id="KW-0472">Membrane</keyword>
<keyword id="KW-0573">Peptidoglycan synthesis</keyword>
<keyword id="KW-1185">Reference proteome</keyword>
<keyword id="KW-0808">Transferase</keyword>
<dbReference type="EC" id="2.4.1.227" evidence="1"/>
<dbReference type="EMBL" id="CR954253">
    <property type="protein sequence ID" value="CAI97568.1"/>
    <property type="molecule type" value="Genomic_DNA"/>
</dbReference>
<dbReference type="RefSeq" id="WP_003619171.1">
    <property type="nucleotide sequence ID" value="NZ_JQAV01000001.1"/>
</dbReference>
<dbReference type="SMR" id="Q1GAT5"/>
<dbReference type="STRING" id="390333.Ldb0741"/>
<dbReference type="CAZy" id="GT28">
    <property type="family name" value="Glycosyltransferase Family 28"/>
</dbReference>
<dbReference type="KEGG" id="ldb:Ldb0741"/>
<dbReference type="PATRIC" id="fig|390333.13.peg.58"/>
<dbReference type="eggNOG" id="COG0707">
    <property type="taxonomic scope" value="Bacteria"/>
</dbReference>
<dbReference type="HOGENOM" id="CLU_037404_0_1_9"/>
<dbReference type="BioCyc" id="LDEL390333:LDB_RS03250-MONOMER"/>
<dbReference type="UniPathway" id="UPA00219"/>
<dbReference type="Proteomes" id="UP000001259">
    <property type="component" value="Chromosome"/>
</dbReference>
<dbReference type="GO" id="GO:0005886">
    <property type="term" value="C:plasma membrane"/>
    <property type="evidence" value="ECO:0007669"/>
    <property type="project" value="UniProtKB-SubCell"/>
</dbReference>
<dbReference type="GO" id="GO:0050511">
    <property type="term" value="F:undecaprenyldiphospho-muramoylpentapeptide beta-N-acetylglucosaminyltransferase activity"/>
    <property type="evidence" value="ECO:0007669"/>
    <property type="project" value="UniProtKB-UniRule"/>
</dbReference>
<dbReference type="GO" id="GO:0005975">
    <property type="term" value="P:carbohydrate metabolic process"/>
    <property type="evidence" value="ECO:0007669"/>
    <property type="project" value="InterPro"/>
</dbReference>
<dbReference type="GO" id="GO:0051301">
    <property type="term" value="P:cell division"/>
    <property type="evidence" value="ECO:0007669"/>
    <property type="project" value="UniProtKB-KW"/>
</dbReference>
<dbReference type="GO" id="GO:0071555">
    <property type="term" value="P:cell wall organization"/>
    <property type="evidence" value="ECO:0007669"/>
    <property type="project" value="UniProtKB-KW"/>
</dbReference>
<dbReference type="GO" id="GO:0030259">
    <property type="term" value="P:lipid glycosylation"/>
    <property type="evidence" value="ECO:0007669"/>
    <property type="project" value="UniProtKB-UniRule"/>
</dbReference>
<dbReference type="GO" id="GO:0009252">
    <property type="term" value="P:peptidoglycan biosynthetic process"/>
    <property type="evidence" value="ECO:0007669"/>
    <property type="project" value="UniProtKB-UniRule"/>
</dbReference>
<dbReference type="GO" id="GO:0008360">
    <property type="term" value="P:regulation of cell shape"/>
    <property type="evidence" value="ECO:0007669"/>
    <property type="project" value="UniProtKB-KW"/>
</dbReference>
<dbReference type="CDD" id="cd03785">
    <property type="entry name" value="GT28_MurG"/>
    <property type="match status" value="1"/>
</dbReference>
<dbReference type="Gene3D" id="3.40.50.2000">
    <property type="entry name" value="Glycogen Phosphorylase B"/>
    <property type="match status" value="2"/>
</dbReference>
<dbReference type="HAMAP" id="MF_00033">
    <property type="entry name" value="MurG"/>
    <property type="match status" value="1"/>
</dbReference>
<dbReference type="InterPro" id="IPR006009">
    <property type="entry name" value="GlcNAc_MurG"/>
</dbReference>
<dbReference type="InterPro" id="IPR007235">
    <property type="entry name" value="Glyco_trans_28_C"/>
</dbReference>
<dbReference type="InterPro" id="IPR004276">
    <property type="entry name" value="GlycoTrans_28_N"/>
</dbReference>
<dbReference type="NCBIfam" id="TIGR01133">
    <property type="entry name" value="murG"/>
    <property type="match status" value="1"/>
</dbReference>
<dbReference type="PANTHER" id="PTHR21015:SF22">
    <property type="entry name" value="GLYCOSYLTRANSFERASE"/>
    <property type="match status" value="1"/>
</dbReference>
<dbReference type="PANTHER" id="PTHR21015">
    <property type="entry name" value="UDP-N-ACETYLGLUCOSAMINE--N-ACETYLMURAMYL-(PENTAPEPTIDE) PYROPHOSPHORYL-UNDECAPRENOL N-ACETYLGLUCOSAMINE TRANSFERASE 1"/>
    <property type="match status" value="1"/>
</dbReference>
<dbReference type="Pfam" id="PF04101">
    <property type="entry name" value="Glyco_tran_28_C"/>
    <property type="match status" value="1"/>
</dbReference>
<dbReference type="Pfam" id="PF03033">
    <property type="entry name" value="Glyco_transf_28"/>
    <property type="match status" value="1"/>
</dbReference>
<dbReference type="SUPFAM" id="SSF53756">
    <property type="entry name" value="UDP-Glycosyltransferase/glycogen phosphorylase"/>
    <property type="match status" value="1"/>
</dbReference>